<protein>
    <recommendedName>
        <fullName evidence="1">1,4-dihydroxy-2-naphthoyl-CoA synthase</fullName>
        <shortName evidence="1">DHNA-CoA synthase</shortName>
        <ecNumber evidence="1">4.1.3.36</ecNumber>
    </recommendedName>
</protein>
<reference key="1">
    <citation type="submission" date="2006-10" db="EMBL/GenBank/DDBJ databases">
        <authorList>
            <person name="Fleischmann R.D."/>
            <person name="Dodson R.J."/>
            <person name="Haft D.H."/>
            <person name="Merkel J.S."/>
            <person name="Nelson W.C."/>
            <person name="Fraser C.M."/>
        </authorList>
    </citation>
    <scope>NUCLEOTIDE SEQUENCE [LARGE SCALE GENOMIC DNA]</scope>
    <source>
        <strain>ATCC 700084 / mc(2)155</strain>
    </source>
</reference>
<reference key="2">
    <citation type="journal article" date="2007" name="Genome Biol.">
        <title>Interrupted coding sequences in Mycobacterium smegmatis: authentic mutations or sequencing errors?</title>
        <authorList>
            <person name="Deshayes C."/>
            <person name="Perrodou E."/>
            <person name="Gallien S."/>
            <person name="Euphrasie D."/>
            <person name="Schaeffer C."/>
            <person name="Van-Dorsselaer A."/>
            <person name="Poch O."/>
            <person name="Lecompte O."/>
            <person name="Reyrat J.-M."/>
        </authorList>
    </citation>
    <scope>NUCLEOTIDE SEQUENCE [LARGE SCALE GENOMIC DNA]</scope>
    <source>
        <strain>ATCC 700084 / mc(2)155</strain>
    </source>
</reference>
<reference key="3">
    <citation type="journal article" date="2009" name="Genome Res.">
        <title>Ortho-proteogenomics: multiple proteomes investigation through orthology and a new MS-based protocol.</title>
        <authorList>
            <person name="Gallien S."/>
            <person name="Perrodou E."/>
            <person name="Carapito C."/>
            <person name="Deshayes C."/>
            <person name="Reyrat J.-M."/>
            <person name="Van Dorsselaer A."/>
            <person name="Poch O."/>
            <person name="Schaeffer C."/>
            <person name="Lecompte O."/>
        </authorList>
    </citation>
    <scope>NUCLEOTIDE SEQUENCE [LARGE SCALE GENOMIC DNA]</scope>
    <source>
        <strain>ATCC 700084 / mc(2)155</strain>
    </source>
</reference>
<reference key="4">
    <citation type="journal article" date="2010" name="J. Biol. Chem.">
        <title>A bicarbonate cofactor modulates 1,4-dihydroxy-2-naphthoyl-coenzyme a synthase in menaquinone biosynthesis of Escherichia coli.</title>
        <authorList>
            <person name="Jiang M."/>
            <person name="Chen M."/>
            <person name="Guo Z.F."/>
            <person name="Guo Z."/>
        </authorList>
    </citation>
    <scope>FUNCTION AS A DHNA-COA SYNTHASE</scope>
    <scope>CATALYTIC ACTIVITY</scope>
    <scope>SITE ASP-180</scope>
</reference>
<gene>
    <name evidence="1" type="primary">menB</name>
    <name type="ordered locus">MSMEG_1075</name>
    <name type="ordered locus">MSMEI_1042</name>
</gene>
<comment type="function">
    <text evidence="1 2">Converts o-succinylbenzoyl-CoA (OSB-CoA) to 1,4-dihydroxy-2-naphthoyl-CoA (DHNA-CoA).</text>
</comment>
<comment type="catalytic activity">
    <reaction evidence="1 2">
        <text>2-succinylbenzoyl-CoA + H(+) = 1,4-dihydroxy-2-naphthoyl-CoA + H2O</text>
        <dbReference type="Rhea" id="RHEA:26562"/>
        <dbReference type="ChEBI" id="CHEBI:15377"/>
        <dbReference type="ChEBI" id="CHEBI:15378"/>
        <dbReference type="ChEBI" id="CHEBI:57364"/>
        <dbReference type="ChEBI" id="CHEBI:58897"/>
        <dbReference type="EC" id="4.1.3.36"/>
    </reaction>
</comment>
<comment type="pathway">
    <text evidence="1">Quinol/quinone metabolism; 1,4-dihydroxy-2-naphthoate biosynthesis; 1,4-dihydroxy-2-naphthoate from chorismate: step 6/7.</text>
</comment>
<comment type="pathway">
    <text evidence="1">Quinol/quinone metabolism; menaquinone biosynthesis.</text>
</comment>
<comment type="similarity">
    <text evidence="1">Belongs to the enoyl-CoA hydratase/isomerase family. MenB subfamily.</text>
</comment>
<keyword id="KW-0456">Lyase</keyword>
<keyword id="KW-0474">Menaquinone biosynthesis</keyword>
<keyword id="KW-1185">Reference proteome</keyword>
<name>MENB_MYCS2</name>
<proteinExistence type="evidence at protein level"/>
<accession>A0QRD3</accession>
<accession>I7FXI8</accession>
<sequence length="309" mass="34303">MSSQAASDNPFDPAMWERVPGFDDLTDITYHRHVLDGARQPTVRVAFDRPEVRNAFRPHTVDELYRVLDHARMSSDVGVILLTGNGPSPKDGGWAFCSGGDQRIRGRTGYQYASGETAETVDPARAGRLHILEVQRLIRFMPKVVICLVNGWAAGGGHSLHVTCDLTLASREHARFKQTDADVGSFDGGFGSAYLARQTGQKFAREIFFLGRAYDAQTMHQMGAVNEVVDHADLEKAGLQYAAEINGKSPQAIRMLKFAFNLIDDGLVGQQVFAGEATRLAYMTDEAVEGRDAFLEKRDPDWSRFPRYF</sequence>
<dbReference type="EC" id="4.1.3.36" evidence="1"/>
<dbReference type="EMBL" id="CP000480">
    <property type="protein sequence ID" value="ABK74961.1"/>
    <property type="molecule type" value="Genomic_DNA"/>
</dbReference>
<dbReference type="EMBL" id="CP001663">
    <property type="protein sequence ID" value="AFP37522.1"/>
    <property type="molecule type" value="Genomic_DNA"/>
</dbReference>
<dbReference type="RefSeq" id="WP_003892442.1">
    <property type="nucleotide sequence ID" value="NZ_SIJM01000011.1"/>
</dbReference>
<dbReference type="RefSeq" id="YP_885471.1">
    <property type="nucleotide sequence ID" value="NC_008596.1"/>
</dbReference>
<dbReference type="SMR" id="A0QRD3"/>
<dbReference type="STRING" id="246196.MSMEG_1075"/>
<dbReference type="PaxDb" id="246196-MSMEI_1042"/>
<dbReference type="KEGG" id="msb:LJ00_05340"/>
<dbReference type="KEGG" id="msg:MSMEI_1042"/>
<dbReference type="KEGG" id="msm:MSMEG_1075"/>
<dbReference type="PATRIC" id="fig|246196.19.peg.1062"/>
<dbReference type="eggNOG" id="COG0447">
    <property type="taxonomic scope" value="Bacteria"/>
</dbReference>
<dbReference type="OrthoDB" id="9807606at2"/>
<dbReference type="UniPathway" id="UPA00079"/>
<dbReference type="UniPathway" id="UPA01057">
    <property type="reaction ID" value="UER00167"/>
</dbReference>
<dbReference type="Proteomes" id="UP000000757">
    <property type="component" value="Chromosome"/>
</dbReference>
<dbReference type="Proteomes" id="UP000006158">
    <property type="component" value="Chromosome"/>
</dbReference>
<dbReference type="GO" id="GO:0008935">
    <property type="term" value="F:1,4-dihydroxy-2-naphthoyl-CoA synthase activity"/>
    <property type="evidence" value="ECO:0000314"/>
    <property type="project" value="UniProtKB"/>
</dbReference>
<dbReference type="GO" id="GO:0009234">
    <property type="term" value="P:menaquinone biosynthetic process"/>
    <property type="evidence" value="ECO:0000250"/>
    <property type="project" value="UniProtKB"/>
</dbReference>
<dbReference type="CDD" id="cd06558">
    <property type="entry name" value="crotonase-like"/>
    <property type="match status" value="1"/>
</dbReference>
<dbReference type="FunFam" id="1.10.12.10:FF:000003">
    <property type="entry name" value="1,4-dihydroxy-2-naphthoyl-CoA synthase"/>
    <property type="match status" value="1"/>
</dbReference>
<dbReference type="FunFam" id="3.90.226.10:FF:000003">
    <property type="entry name" value="1,4-dihydroxy-2-naphthoyl-CoA synthase"/>
    <property type="match status" value="1"/>
</dbReference>
<dbReference type="Gene3D" id="3.90.226.10">
    <property type="entry name" value="2-enoyl-CoA Hydratase, Chain A, domain 1"/>
    <property type="match status" value="1"/>
</dbReference>
<dbReference type="Gene3D" id="1.10.12.10">
    <property type="entry name" value="Lyase 2-enoyl-coa Hydratase, Chain A, domain 2"/>
    <property type="match status" value="1"/>
</dbReference>
<dbReference type="HAMAP" id="MF_01934">
    <property type="entry name" value="MenB"/>
    <property type="match status" value="1"/>
</dbReference>
<dbReference type="InterPro" id="IPR029045">
    <property type="entry name" value="ClpP/crotonase-like_dom_sf"/>
</dbReference>
<dbReference type="InterPro" id="IPR010198">
    <property type="entry name" value="DHNA-CoA_synthase_MenB"/>
</dbReference>
<dbReference type="InterPro" id="IPR001753">
    <property type="entry name" value="Enoyl-CoA_hydra/iso"/>
</dbReference>
<dbReference type="InterPro" id="IPR014748">
    <property type="entry name" value="Enoyl-CoA_hydra_C"/>
</dbReference>
<dbReference type="NCBIfam" id="TIGR01929">
    <property type="entry name" value="menB"/>
    <property type="match status" value="1"/>
</dbReference>
<dbReference type="NCBIfam" id="NF006186">
    <property type="entry name" value="PRK08321.1"/>
    <property type="match status" value="1"/>
</dbReference>
<dbReference type="PANTHER" id="PTHR43113:SF1">
    <property type="entry name" value="1,4-DIHYDROXY-2-NAPHTHOYL-COA SYNTHASE, PEROXISOMAL"/>
    <property type="match status" value="1"/>
</dbReference>
<dbReference type="PANTHER" id="PTHR43113">
    <property type="entry name" value="NUCLEOSIDE-DIPHOSPHATE-SUGAR EPIMERASE"/>
    <property type="match status" value="1"/>
</dbReference>
<dbReference type="Pfam" id="PF00378">
    <property type="entry name" value="ECH_1"/>
    <property type="match status" value="1"/>
</dbReference>
<dbReference type="SUPFAM" id="SSF52096">
    <property type="entry name" value="ClpP/crotonase"/>
    <property type="match status" value="1"/>
</dbReference>
<feature type="chain" id="PRO_0000403187" description="1,4-dihydroxy-2-naphthoyl-CoA synthase">
    <location>
        <begin position="1"/>
        <end position="309"/>
    </location>
</feature>
<feature type="binding site" description="in other chain" evidence="1">
    <location>
        <position position="53"/>
    </location>
    <ligand>
        <name>substrate</name>
        <note>ligand shared between two neighboring subunits</note>
    </ligand>
</feature>
<feature type="binding site" description="in other chain" evidence="1">
    <location>
        <begin position="98"/>
        <end position="102"/>
    </location>
    <ligand>
        <name>substrate</name>
        <note>ligand shared between two neighboring subunits</note>
    </ligand>
</feature>
<feature type="binding site" description="in other chain" evidence="1">
    <location>
        <position position="110"/>
    </location>
    <ligand>
        <name>substrate</name>
        <note>ligand shared between two neighboring subunits</note>
    </ligand>
</feature>
<feature type="binding site" description="in other chain" evidence="1">
    <location>
        <begin position="152"/>
        <end position="156"/>
    </location>
    <ligand>
        <name>substrate</name>
        <note>ligand shared between two neighboring subunits</note>
    </ligand>
</feature>
<feature type="binding site" description="in other chain" evidence="1">
    <location>
        <position position="179"/>
    </location>
    <ligand>
        <name>substrate</name>
        <note>ligand shared between two neighboring subunits</note>
    </ligand>
</feature>
<feature type="binding site" description="in other chain" evidence="1">
    <location>
        <position position="185"/>
    </location>
    <ligand>
        <name>substrate</name>
        <note>ligand shared between two neighboring subunits</note>
    </ligand>
</feature>
<feature type="binding site" evidence="1">
    <location>
        <position position="282"/>
    </location>
    <ligand>
        <name>substrate</name>
        <note>ligand shared between two neighboring subunits</note>
    </ligand>
</feature>
<feature type="binding site" evidence="1">
    <location>
        <position position="297"/>
    </location>
    <ligand>
        <name>substrate</name>
        <note>ligand shared between two neighboring subunits</note>
    </ligand>
</feature>
<feature type="site" description="Important for catalysis" evidence="1">
    <location>
        <position position="110"/>
    </location>
</feature>
<feature type="site" description="Important for catalysis" evidence="1">
    <location>
        <position position="180"/>
    </location>
</feature>
<feature type="site" description="Important for catalysis" evidence="1">
    <location>
        <position position="282"/>
    </location>
</feature>
<organism>
    <name type="scientific">Mycolicibacterium smegmatis (strain ATCC 700084 / mc(2)155)</name>
    <name type="common">Mycobacterium smegmatis</name>
    <dbReference type="NCBI Taxonomy" id="246196"/>
    <lineage>
        <taxon>Bacteria</taxon>
        <taxon>Bacillati</taxon>
        <taxon>Actinomycetota</taxon>
        <taxon>Actinomycetes</taxon>
        <taxon>Mycobacteriales</taxon>
        <taxon>Mycobacteriaceae</taxon>
        <taxon>Mycolicibacterium</taxon>
    </lineage>
</organism>
<evidence type="ECO:0000255" key="1">
    <source>
        <dbReference type="HAMAP-Rule" id="MF_01934"/>
    </source>
</evidence>
<evidence type="ECO:0000269" key="2">
    <source>
    </source>
</evidence>